<organism>
    <name type="scientific">Arabidopsis thaliana</name>
    <name type="common">Mouse-ear cress</name>
    <dbReference type="NCBI Taxonomy" id="3702"/>
    <lineage>
        <taxon>Eukaryota</taxon>
        <taxon>Viridiplantae</taxon>
        <taxon>Streptophyta</taxon>
        <taxon>Embryophyta</taxon>
        <taxon>Tracheophyta</taxon>
        <taxon>Spermatophyta</taxon>
        <taxon>Magnoliopsida</taxon>
        <taxon>eudicotyledons</taxon>
        <taxon>Gunneridae</taxon>
        <taxon>Pentapetalae</taxon>
        <taxon>rosids</taxon>
        <taxon>malvids</taxon>
        <taxon>Brassicales</taxon>
        <taxon>Brassicaceae</taxon>
        <taxon>Camelineae</taxon>
        <taxon>Arabidopsis</taxon>
    </lineage>
</organism>
<comment type="function">
    <text evidence="2">Mediates both low-affinity uptake and efflux of sugar across the plasma membrane.</text>
</comment>
<comment type="subunit">
    <text evidence="6">Forms homooligomers and heterooligomers with SWEET8 and SWEET17.</text>
</comment>
<comment type="subcellular location">
    <subcellularLocation>
        <location evidence="6">Cell membrane</location>
        <topology evidence="1">Multi-pass membrane protein</topology>
    </subcellularLocation>
</comment>
<comment type="induction">
    <text evidence="5">Induced by the pathogenic bacteria P.syringae pv. tomato, and slightly induced by the powdery mildew fungus G.cichoracearum and the fungal pathogen B.cinerea.</text>
</comment>
<comment type="similarity">
    <text evidence="8">Belongs to the SWEET sugar transporter family.</text>
</comment>
<comment type="sequence caution" evidence="8">
    <conflict type="erroneous gene model prediction">
        <sequence resource="EMBL-CDS" id="BAB01122"/>
    </conflict>
</comment>
<comment type="sequence caution" evidence="8">
    <conflict type="erroneous initiation">
        <sequence resource="EMBL-CDS" id="BAC42911"/>
    </conflict>
    <text>Truncated N-terminus.</text>
</comment>
<name>SWET4_ARATH</name>
<proteinExistence type="evidence at protein level"/>
<feature type="chain" id="PRO_0000404105" description="Bidirectional sugar transporter SWEET4">
    <location>
        <begin position="1"/>
        <end position="251"/>
    </location>
</feature>
<feature type="topological domain" description="Extracellular" evidence="3">
    <location>
        <begin position="1"/>
        <end position="12"/>
    </location>
</feature>
<feature type="transmembrane region" description="Helical; Name=1" evidence="3">
    <location>
        <begin position="13"/>
        <end position="33"/>
    </location>
</feature>
<feature type="topological domain" description="Cytoplasmic" evidence="3">
    <location>
        <begin position="34"/>
        <end position="45"/>
    </location>
</feature>
<feature type="transmembrane region" description="Helical; Name=2" evidence="3">
    <location>
        <begin position="46"/>
        <end position="66"/>
    </location>
</feature>
<feature type="topological domain" description="Extracellular" evidence="3">
    <location>
        <begin position="67"/>
        <end position="72"/>
    </location>
</feature>
<feature type="transmembrane region" description="Helical; Name=3" evidence="3">
    <location>
        <begin position="73"/>
        <end position="93"/>
    </location>
</feature>
<feature type="topological domain" description="Cytoplasmic" evidence="3">
    <location>
        <begin position="94"/>
        <end position="103"/>
    </location>
</feature>
<feature type="transmembrane region" description="Helical; Name=4" evidence="3">
    <location>
        <begin position="104"/>
        <end position="124"/>
    </location>
</feature>
<feature type="topological domain" description="Extracellular" evidence="3">
    <location>
        <begin position="125"/>
        <end position="132"/>
    </location>
</feature>
<feature type="transmembrane region" description="Helical; Name=5" evidence="3">
    <location>
        <begin position="133"/>
        <end position="153"/>
    </location>
</feature>
<feature type="topological domain" description="Cytoplasmic" evidence="3">
    <location>
        <begin position="154"/>
        <end position="163"/>
    </location>
</feature>
<feature type="transmembrane region" description="Helical; Name=6" evidence="3">
    <location>
        <begin position="164"/>
        <end position="186"/>
    </location>
</feature>
<feature type="topological domain" description="Extracellular" evidence="3">
    <location>
        <begin position="187"/>
        <end position="190"/>
    </location>
</feature>
<feature type="transmembrane region" description="Helical; Name=7" evidence="3">
    <location>
        <begin position="191"/>
        <end position="213"/>
    </location>
</feature>
<feature type="topological domain" description="Cytoplasmic" evidence="3">
    <location>
        <begin position="214"/>
        <end position="251"/>
    </location>
</feature>
<feature type="domain" description="MtN3/slv 1">
    <location>
        <begin position="12"/>
        <end position="96"/>
    </location>
</feature>
<feature type="domain" description="MtN3/slv 2">
    <location>
        <begin position="133"/>
        <end position="216"/>
    </location>
</feature>
<feature type="region of interest" description="Disordered" evidence="4">
    <location>
        <begin position="220"/>
        <end position="251"/>
    </location>
</feature>
<feature type="compositionally biased region" description="Polar residues" evidence="4">
    <location>
        <begin position="231"/>
        <end position="245"/>
    </location>
</feature>
<feature type="glycosylation site" description="N-linked (GlcNAc...) asparagine" evidence="3">
    <location>
        <position position="3"/>
    </location>
</feature>
<feature type="sequence conflict" description="In Ref. 4; AAM64306." evidence="8" ref="4">
    <original>L</original>
    <variation>V</variation>
    <location>
        <position position="84"/>
    </location>
</feature>
<feature type="sequence conflict" description="In Ref. 4; AAM64306." evidence="8" ref="4">
    <original>K</original>
    <variation>N</variation>
    <location>
        <position position="219"/>
    </location>
</feature>
<accession>Q944M5</accession>
<accession>Q8GXD7</accession>
<accession>Q8LD36</accession>
<accession>Q9LRT5</accession>
<sequence>MVNATVARNIAGICGNVISLFLFLSPIPTFITIYKKKKVEEYKADPYLATVLNCALWVFYGLPMVQPDSLLVITINGTGLAIELVYLAIFFFFSPTSRKVKVGLWLIGEMVFVGIVATCTLLLFHTHNQRSSFVGIFCVIFVSLMYIAPLTIMSKVIKTKSVKYMPFSLSLANFLNGVVWVIYALIKFDLFILIGNGLGTVSGAVQLILYACYYKTTPKDDEDEEDEENLSKVNSQLQLSGNSGQAKRVSA</sequence>
<protein>
    <recommendedName>
        <fullName evidence="7">Bidirectional sugar transporter SWEET4</fullName>
        <shortName evidence="7">AtSWEET4</shortName>
    </recommendedName>
    <alternativeName>
        <fullName evidence="7">Protein SUGARS WILL EVENTUALLY BE EXPORTED TRANSPORTERS 4</fullName>
    </alternativeName>
</protein>
<keyword id="KW-1003">Cell membrane</keyword>
<keyword id="KW-0325">Glycoprotein</keyword>
<keyword id="KW-0472">Membrane</keyword>
<keyword id="KW-1185">Reference proteome</keyword>
<keyword id="KW-0677">Repeat</keyword>
<keyword id="KW-0762">Sugar transport</keyword>
<keyword id="KW-0812">Transmembrane</keyword>
<keyword id="KW-1133">Transmembrane helix</keyword>
<keyword id="KW-0813">Transport</keyword>
<reference key="1">
    <citation type="journal article" date="2000" name="DNA Res.">
        <title>Structural analysis of Arabidopsis thaliana chromosome 3. II. Sequence features of the 4,251,695 bp regions covered by 90 P1, TAC and BAC clones.</title>
        <authorList>
            <person name="Kaneko T."/>
            <person name="Katoh T."/>
            <person name="Sato S."/>
            <person name="Nakamura Y."/>
            <person name="Asamizu E."/>
            <person name="Tabata S."/>
        </authorList>
    </citation>
    <scope>NUCLEOTIDE SEQUENCE [LARGE SCALE GENOMIC DNA]</scope>
    <source>
        <strain>cv. Columbia</strain>
    </source>
</reference>
<reference key="2">
    <citation type="journal article" date="2017" name="Plant J.">
        <title>Araport11: a complete reannotation of the Arabidopsis thaliana reference genome.</title>
        <authorList>
            <person name="Cheng C.Y."/>
            <person name="Krishnakumar V."/>
            <person name="Chan A.P."/>
            <person name="Thibaud-Nissen F."/>
            <person name="Schobel S."/>
            <person name="Town C.D."/>
        </authorList>
    </citation>
    <scope>GENOME REANNOTATION</scope>
    <source>
        <strain>cv. Columbia</strain>
    </source>
</reference>
<reference key="3">
    <citation type="journal article" date="2003" name="Science">
        <title>Empirical analysis of transcriptional activity in the Arabidopsis genome.</title>
        <authorList>
            <person name="Yamada K."/>
            <person name="Lim J."/>
            <person name="Dale J.M."/>
            <person name="Chen H."/>
            <person name="Shinn P."/>
            <person name="Palm C.J."/>
            <person name="Southwick A.M."/>
            <person name="Wu H.C."/>
            <person name="Kim C.J."/>
            <person name="Nguyen M."/>
            <person name="Pham P.K."/>
            <person name="Cheuk R.F."/>
            <person name="Karlin-Newmann G."/>
            <person name="Liu S.X."/>
            <person name="Lam B."/>
            <person name="Sakano H."/>
            <person name="Wu T."/>
            <person name="Yu G."/>
            <person name="Miranda M."/>
            <person name="Quach H.L."/>
            <person name="Tripp M."/>
            <person name="Chang C.H."/>
            <person name="Lee J.M."/>
            <person name="Toriumi M.J."/>
            <person name="Chan M.M."/>
            <person name="Tang C.C."/>
            <person name="Onodera C.S."/>
            <person name="Deng J.M."/>
            <person name="Akiyama K."/>
            <person name="Ansari Y."/>
            <person name="Arakawa T."/>
            <person name="Banh J."/>
            <person name="Banno F."/>
            <person name="Bowser L."/>
            <person name="Brooks S.Y."/>
            <person name="Carninci P."/>
            <person name="Chao Q."/>
            <person name="Choy N."/>
            <person name="Enju A."/>
            <person name="Goldsmith A.D."/>
            <person name="Gurjal M."/>
            <person name="Hansen N.F."/>
            <person name="Hayashizaki Y."/>
            <person name="Johnson-Hopson C."/>
            <person name="Hsuan V.W."/>
            <person name="Iida K."/>
            <person name="Karnes M."/>
            <person name="Khan S."/>
            <person name="Koesema E."/>
            <person name="Ishida J."/>
            <person name="Jiang P.X."/>
            <person name="Jones T."/>
            <person name="Kawai J."/>
            <person name="Kamiya A."/>
            <person name="Meyers C."/>
            <person name="Nakajima M."/>
            <person name="Narusaka M."/>
            <person name="Seki M."/>
            <person name="Sakurai T."/>
            <person name="Satou M."/>
            <person name="Tamse R."/>
            <person name="Vaysberg M."/>
            <person name="Wallender E.K."/>
            <person name="Wong C."/>
            <person name="Yamamura Y."/>
            <person name="Yuan S."/>
            <person name="Shinozaki K."/>
            <person name="Davis R.W."/>
            <person name="Theologis A."/>
            <person name="Ecker J.R."/>
        </authorList>
    </citation>
    <scope>NUCLEOTIDE SEQUENCE [LARGE SCALE MRNA]</scope>
    <source>
        <strain>cv. Columbia</strain>
    </source>
</reference>
<reference key="4">
    <citation type="submission" date="2002-03" db="EMBL/GenBank/DDBJ databases">
        <title>Full-length cDNA from Arabidopsis thaliana.</title>
        <authorList>
            <person name="Brover V.V."/>
            <person name="Troukhan M.E."/>
            <person name="Alexandrov N.A."/>
            <person name="Lu Y.-P."/>
            <person name="Flavell R.B."/>
            <person name="Feldmann K.A."/>
        </authorList>
    </citation>
    <scope>NUCLEOTIDE SEQUENCE [LARGE SCALE MRNA]</scope>
</reference>
<reference key="5">
    <citation type="journal article" date="2002" name="Science">
        <title>Functional annotation of a full-length Arabidopsis cDNA collection.</title>
        <authorList>
            <person name="Seki M."/>
            <person name="Narusaka M."/>
            <person name="Kamiya A."/>
            <person name="Ishida J."/>
            <person name="Satou M."/>
            <person name="Sakurai T."/>
            <person name="Nakajima M."/>
            <person name="Enju A."/>
            <person name="Akiyama K."/>
            <person name="Oono Y."/>
            <person name="Muramatsu M."/>
            <person name="Hayashizaki Y."/>
            <person name="Kawai J."/>
            <person name="Carninci P."/>
            <person name="Itoh M."/>
            <person name="Ishii Y."/>
            <person name="Arakawa T."/>
            <person name="Shibata K."/>
            <person name="Shinagawa A."/>
            <person name="Shinozaki K."/>
        </authorList>
    </citation>
    <scope>NUCLEOTIDE SEQUENCE [LARGE SCALE MRNA] OF 148-251</scope>
    <source>
        <strain>cv. Columbia</strain>
    </source>
</reference>
<reference key="6">
    <citation type="journal article" date="2010" name="Nature">
        <title>Sugar transporters for intercellular exchange and nutrition of pathogens.</title>
        <authorList>
            <person name="Chen L.-Q."/>
            <person name="Hou B.-H."/>
            <person name="Lalonde S."/>
            <person name="Takanaga H."/>
            <person name="Hartung M.L."/>
            <person name="Qu X.-Q."/>
            <person name="Guo W.-J."/>
            <person name="Kim J.-G."/>
            <person name="Underwood W."/>
            <person name="Chaudhuri B."/>
            <person name="Chermak D."/>
            <person name="Antony G."/>
            <person name="White F.F."/>
            <person name="Somerville S.C."/>
            <person name="Mudgett M.B."/>
            <person name="Frommer W.B."/>
        </authorList>
    </citation>
    <scope>INDUCTION BY PATHOGENS</scope>
    <scope>GENE FAMILY</scope>
    <scope>NOMENCLATURE</scope>
    <source>
        <strain>cv. Columbia</strain>
    </source>
</reference>
<reference key="7">
    <citation type="journal article" date="2013" name="Proc. Natl. Acad. Sci. U.S.A.">
        <title>Functional role of oligomerization for bacterial and plant SWEET sugar transporter family.</title>
        <authorList>
            <person name="Xuan Y.H."/>
            <person name="Hu Y.B."/>
            <person name="Chen L.-Q."/>
            <person name="Sosso D."/>
            <person name="Ducat D.C."/>
            <person name="Hou B.-H."/>
            <person name="Frommer W.B."/>
        </authorList>
    </citation>
    <scope>SUBUNIT</scope>
    <scope>INTERACTION WITH SWEET8 AND SWEET17</scope>
    <scope>SUBCELLULAR LOCATION</scope>
</reference>
<gene>
    <name evidence="7" type="primary">SWEET4</name>
    <name type="ordered locus">At3g28007</name>
    <name type="ORF">MMG15.4</name>
</gene>
<dbReference type="EMBL" id="AB028616">
    <property type="protein sequence ID" value="BAB01122.1"/>
    <property type="status" value="ALT_SEQ"/>
    <property type="molecule type" value="Genomic_DNA"/>
</dbReference>
<dbReference type="EMBL" id="CP002686">
    <property type="protein sequence ID" value="AEE77391.1"/>
    <property type="molecule type" value="Genomic_DNA"/>
</dbReference>
<dbReference type="EMBL" id="AF428275">
    <property type="protein sequence ID" value="AAL16107.1"/>
    <property type="molecule type" value="mRNA"/>
</dbReference>
<dbReference type="EMBL" id="BT002215">
    <property type="protein sequence ID" value="AAN72227.1"/>
    <property type="molecule type" value="mRNA"/>
</dbReference>
<dbReference type="EMBL" id="AY086230">
    <property type="protein sequence ID" value="AAM64306.1"/>
    <property type="molecule type" value="mRNA"/>
</dbReference>
<dbReference type="EMBL" id="AK118293">
    <property type="protein sequence ID" value="BAC42911.1"/>
    <property type="status" value="ALT_INIT"/>
    <property type="molecule type" value="mRNA"/>
</dbReference>
<dbReference type="RefSeq" id="NP_566829.1">
    <property type="nucleotide sequence ID" value="NM_113718.5"/>
</dbReference>
<dbReference type="SMR" id="Q944M5"/>
<dbReference type="BioGRID" id="7754">
    <property type="interactions" value="2"/>
</dbReference>
<dbReference type="FunCoup" id="Q944M5">
    <property type="interactions" value="435"/>
</dbReference>
<dbReference type="STRING" id="3702.Q944M5"/>
<dbReference type="GlyCosmos" id="Q944M5">
    <property type="glycosylation" value="1 site, No reported glycans"/>
</dbReference>
<dbReference type="GlyGen" id="Q944M5">
    <property type="glycosylation" value="1 site"/>
</dbReference>
<dbReference type="iPTMnet" id="Q944M5"/>
<dbReference type="PaxDb" id="3702-AT3G28007.1"/>
<dbReference type="ProteomicsDB" id="226553"/>
<dbReference type="EnsemblPlants" id="AT3G28007.1">
    <property type="protein sequence ID" value="AT3G28007.1"/>
    <property type="gene ID" value="AT3G28007"/>
</dbReference>
<dbReference type="GeneID" id="822424"/>
<dbReference type="Gramene" id="AT3G28007.1">
    <property type="protein sequence ID" value="AT3G28007.1"/>
    <property type="gene ID" value="AT3G28007"/>
</dbReference>
<dbReference type="KEGG" id="ath:AT3G28007"/>
<dbReference type="Araport" id="AT3G28007"/>
<dbReference type="TAIR" id="AT3G28007">
    <property type="gene designation" value="SWEET4"/>
</dbReference>
<dbReference type="eggNOG" id="KOG1623">
    <property type="taxonomic scope" value="Eukaryota"/>
</dbReference>
<dbReference type="HOGENOM" id="CLU_048643_1_0_1"/>
<dbReference type="InParanoid" id="Q944M5"/>
<dbReference type="OMA" id="LWLIGEM"/>
<dbReference type="PhylomeDB" id="Q944M5"/>
<dbReference type="PRO" id="PR:Q944M5"/>
<dbReference type="Proteomes" id="UP000006548">
    <property type="component" value="Chromosome 3"/>
</dbReference>
<dbReference type="ExpressionAtlas" id="Q944M5">
    <property type="expression patterns" value="baseline and differential"/>
</dbReference>
<dbReference type="GO" id="GO:0005886">
    <property type="term" value="C:plasma membrane"/>
    <property type="evidence" value="ECO:0000314"/>
    <property type="project" value="UniProtKB"/>
</dbReference>
<dbReference type="GO" id="GO:0051119">
    <property type="term" value="F:sugar transmembrane transporter activity"/>
    <property type="evidence" value="ECO:0000250"/>
    <property type="project" value="UniProtKB"/>
</dbReference>
<dbReference type="GO" id="GO:0051260">
    <property type="term" value="P:protein homooligomerization"/>
    <property type="evidence" value="ECO:0000314"/>
    <property type="project" value="UniProtKB"/>
</dbReference>
<dbReference type="FunFam" id="1.20.1280.290:FF:000001">
    <property type="entry name" value="Bidirectional sugar transporter SWEET"/>
    <property type="match status" value="1"/>
</dbReference>
<dbReference type="FunFam" id="1.20.1280.290:FF:000002">
    <property type="entry name" value="Bidirectional sugar transporter SWEET"/>
    <property type="match status" value="1"/>
</dbReference>
<dbReference type="Gene3D" id="1.20.1280.290">
    <property type="match status" value="2"/>
</dbReference>
<dbReference type="InterPro" id="IPR036259">
    <property type="entry name" value="MFS_trans_sf"/>
</dbReference>
<dbReference type="InterPro" id="IPR047664">
    <property type="entry name" value="SWEET"/>
</dbReference>
<dbReference type="InterPro" id="IPR004316">
    <property type="entry name" value="SWEET_rpt"/>
</dbReference>
<dbReference type="PANTHER" id="PTHR10791">
    <property type="entry name" value="RAG1-ACTIVATING PROTEIN 1"/>
    <property type="match status" value="1"/>
</dbReference>
<dbReference type="PANTHER" id="PTHR10791:SF30">
    <property type="entry name" value="SUGAR TRANSPORTER SWEET1"/>
    <property type="match status" value="1"/>
</dbReference>
<dbReference type="Pfam" id="PF03083">
    <property type="entry name" value="MtN3_slv"/>
    <property type="match status" value="2"/>
</dbReference>
<dbReference type="SUPFAM" id="SSF103473">
    <property type="entry name" value="MFS general substrate transporter"/>
    <property type="match status" value="1"/>
</dbReference>
<evidence type="ECO:0000250" key="1"/>
<evidence type="ECO:0000250" key="2">
    <source>
        <dbReference type="UniProtKB" id="Q8L9J7"/>
    </source>
</evidence>
<evidence type="ECO:0000255" key="3"/>
<evidence type="ECO:0000256" key="4">
    <source>
        <dbReference type="SAM" id="MobiDB-lite"/>
    </source>
</evidence>
<evidence type="ECO:0000269" key="5">
    <source>
    </source>
</evidence>
<evidence type="ECO:0000269" key="6">
    <source>
    </source>
</evidence>
<evidence type="ECO:0000303" key="7">
    <source>
    </source>
</evidence>
<evidence type="ECO:0000305" key="8"/>